<protein>
    <recommendedName>
        <fullName evidence="1">Large ribosomal subunit protein bL31B</fullName>
    </recommendedName>
    <alternativeName>
        <fullName evidence="2">50S ribosomal protein L31 type B</fullName>
    </alternativeName>
</protein>
<feature type="chain" id="PRO_0000173251" description="Large ribosomal subunit protein bL31B">
    <location>
        <begin position="1"/>
        <end position="86"/>
    </location>
</feature>
<keyword id="KW-0687">Ribonucleoprotein</keyword>
<keyword id="KW-0689">Ribosomal protein</keyword>
<gene>
    <name evidence="1" type="primary">rpmE2</name>
    <name type="ordered locus">SCH_0511</name>
</gene>
<proteinExistence type="inferred from homology"/>
<sequence length="86" mass="9815">MKPDIHPVYRTVVFHDTSANEYVKVGSTIKTEREIELDGVTYPYVTIDVSSKSHPFYTGRQKTFDSESSAARFQKRFGHFIGAKRG</sequence>
<reference key="1">
    <citation type="journal article" date="2005" name="Nucleic Acids Res.">
        <title>The genome sequence of Salmonella enterica serovar Choleraesuis, a highly invasive and resistant zoonotic pathogen.</title>
        <authorList>
            <person name="Chiu C.-H."/>
            <person name="Tang P."/>
            <person name="Chu C."/>
            <person name="Hu S."/>
            <person name="Bao Q."/>
            <person name="Yu J."/>
            <person name="Chou Y.-Y."/>
            <person name="Wang H.-S."/>
            <person name="Lee Y.-S."/>
        </authorList>
    </citation>
    <scope>NUCLEOTIDE SEQUENCE [LARGE SCALE GENOMIC DNA]</scope>
    <source>
        <strain>SC-B67</strain>
    </source>
</reference>
<organism>
    <name type="scientific">Salmonella choleraesuis (strain SC-B67)</name>
    <dbReference type="NCBI Taxonomy" id="321314"/>
    <lineage>
        <taxon>Bacteria</taxon>
        <taxon>Pseudomonadati</taxon>
        <taxon>Pseudomonadota</taxon>
        <taxon>Gammaproteobacteria</taxon>
        <taxon>Enterobacterales</taxon>
        <taxon>Enterobacteriaceae</taxon>
        <taxon>Salmonella</taxon>
    </lineage>
</organism>
<dbReference type="EMBL" id="AE017220">
    <property type="protein sequence ID" value="AAX64417.1"/>
    <property type="molecule type" value="Genomic_DNA"/>
</dbReference>
<dbReference type="RefSeq" id="WP_000801415.1">
    <property type="nucleotide sequence ID" value="NC_006905.1"/>
</dbReference>
<dbReference type="SMR" id="Q57S94"/>
<dbReference type="KEGG" id="sec:SCH_0511"/>
<dbReference type="HOGENOM" id="CLU_114306_2_1_6"/>
<dbReference type="Proteomes" id="UP000000538">
    <property type="component" value="Chromosome"/>
</dbReference>
<dbReference type="GO" id="GO:1990904">
    <property type="term" value="C:ribonucleoprotein complex"/>
    <property type="evidence" value="ECO:0007669"/>
    <property type="project" value="UniProtKB-KW"/>
</dbReference>
<dbReference type="GO" id="GO:0005840">
    <property type="term" value="C:ribosome"/>
    <property type="evidence" value="ECO:0007669"/>
    <property type="project" value="UniProtKB-KW"/>
</dbReference>
<dbReference type="GO" id="GO:0003735">
    <property type="term" value="F:structural constituent of ribosome"/>
    <property type="evidence" value="ECO:0007669"/>
    <property type="project" value="InterPro"/>
</dbReference>
<dbReference type="GO" id="GO:0006412">
    <property type="term" value="P:translation"/>
    <property type="evidence" value="ECO:0007669"/>
    <property type="project" value="UniProtKB-UniRule"/>
</dbReference>
<dbReference type="Gene3D" id="4.10.830.30">
    <property type="entry name" value="Ribosomal protein L31"/>
    <property type="match status" value="1"/>
</dbReference>
<dbReference type="HAMAP" id="MF_00502">
    <property type="entry name" value="Ribosomal_bL31_2"/>
    <property type="match status" value="1"/>
</dbReference>
<dbReference type="InterPro" id="IPR034704">
    <property type="entry name" value="Ribosomal_bL28/bL31-like_sf"/>
</dbReference>
<dbReference type="InterPro" id="IPR002150">
    <property type="entry name" value="Ribosomal_bL31"/>
</dbReference>
<dbReference type="InterPro" id="IPR027493">
    <property type="entry name" value="Ribosomal_bL31_B"/>
</dbReference>
<dbReference type="InterPro" id="IPR042105">
    <property type="entry name" value="Ribosomal_bL31_sf"/>
</dbReference>
<dbReference type="NCBIfam" id="TIGR00105">
    <property type="entry name" value="L31"/>
    <property type="match status" value="1"/>
</dbReference>
<dbReference type="NCBIfam" id="NF002462">
    <property type="entry name" value="PRK01678.1"/>
    <property type="match status" value="1"/>
</dbReference>
<dbReference type="PANTHER" id="PTHR33280">
    <property type="entry name" value="50S RIBOSOMAL PROTEIN L31, CHLOROPLASTIC"/>
    <property type="match status" value="1"/>
</dbReference>
<dbReference type="PANTHER" id="PTHR33280:SF1">
    <property type="entry name" value="LARGE RIBOSOMAL SUBUNIT PROTEIN BL31C"/>
    <property type="match status" value="1"/>
</dbReference>
<dbReference type="Pfam" id="PF01197">
    <property type="entry name" value="Ribosomal_L31"/>
    <property type="match status" value="1"/>
</dbReference>
<dbReference type="PRINTS" id="PR01249">
    <property type="entry name" value="RIBOSOMALL31"/>
</dbReference>
<dbReference type="SUPFAM" id="SSF143800">
    <property type="entry name" value="L28p-like"/>
    <property type="match status" value="1"/>
</dbReference>
<evidence type="ECO:0000255" key="1">
    <source>
        <dbReference type="HAMAP-Rule" id="MF_00502"/>
    </source>
</evidence>
<evidence type="ECO:0000305" key="2"/>
<comment type="subunit">
    <text evidence="1">Part of the 50S ribosomal subunit.</text>
</comment>
<comment type="similarity">
    <text evidence="1">Belongs to the bacterial ribosomal protein bL31 family. Type B subfamily.</text>
</comment>
<accession>Q57S94</accession>
<name>RL31B_SALCH</name>